<protein>
    <recommendedName>
        <fullName evidence="1">S-ribosylhomocysteine lyase</fullName>
        <ecNumber evidence="1">4.4.1.21</ecNumber>
    </recommendedName>
    <alternativeName>
        <fullName evidence="1">AI-2 synthesis protein</fullName>
    </alternativeName>
    <alternativeName>
        <fullName evidence="1">Autoinducer-2 production protein LuxS</fullName>
    </alternativeName>
</protein>
<proteinExistence type="inferred from homology"/>
<dbReference type="EC" id="4.4.1.21" evidence="1"/>
<dbReference type="EMBL" id="CP000918">
    <property type="protein sequence ID" value="ACO16011.1"/>
    <property type="molecule type" value="Genomic_DNA"/>
</dbReference>
<dbReference type="RefSeq" id="WP_000032550.1">
    <property type="nucleotide sequence ID" value="NC_012468.1"/>
</dbReference>
<dbReference type="SMR" id="C1CBB9"/>
<dbReference type="KEGG" id="snm:SP70585_0404"/>
<dbReference type="HOGENOM" id="CLU_107531_2_1_9"/>
<dbReference type="Proteomes" id="UP000002211">
    <property type="component" value="Chromosome"/>
</dbReference>
<dbReference type="GO" id="GO:0005506">
    <property type="term" value="F:iron ion binding"/>
    <property type="evidence" value="ECO:0007669"/>
    <property type="project" value="InterPro"/>
</dbReference>
<dbReference type="GO" id="GO:0043768">
    <property type="term" value="F:S-ribosylhomocysteine lyase activity"/>
    <property type="evidence" value="ECO:0007669"/>
    <property type="project" value="UniProtKB-UniRule"/>
</dbReference>
<dbReference type="GO" id="GO:0009372">
    <property type="term" value="P:quorum sensing"/>
    <property type="evidence" value="ECO:0007669"/>
    <property type="project" value="UniProtKB-UniRule"/>
</dbReference>
<dbReference type="Gene3D" id="3.30.1360.80">
    <property type="entry name" value="S-ribosylhomocysteinase (LuxS)"/>
    <property type="match status" value="1"/>
</dbReference>
<dbReference type="HAMAP" id="MF_00091">
    <property type="entry name" value="LuxS"/>
    <property type="match status" value="1"/>
</dbReference>
<dbReference type="InterPro" id="IPR037005">
    <property type="entry name" value="LuxS_sf"/>
</dbReference>
<dbReference type="InterPro" id="IPR011249">
    <property type="entry name" value="Metalloenz_LuxS/M16"/>
</dbReference>
<dbReference type="InterPro" id="IPR003815">
    <property type="entry name" value="S-ribosylhomocysteinase"/>
</dbReference>
<dbReference type="NCBIfam" id="NF002607">
    <property type="entry name" value="PRK02260.2-5"/>
    <property type="match status" value="1"/>
</dbReference>
<dbReference type="NCBIfam" id="NF002608">
    <property type="entry name" value="PRK02260.3-1"/>
    <property type="match status" value="1"/>
</dbReference>
<dbReference type="PANTHER" id="PTHR35799">
    <property type="entry name" value="S-RIBOSYLHOMOCYSTEINE LYASE"/>
    <property type="match status" value="1"/>
</dbReference>
<dbReference type="PANTHER" id="PTHR35799:SF1">
    <property type="entry name" value="S-RIBOSYLHOMOCYSTEINE LYASE"/>
    <property type="match status" value="1"/>
</dbReference>
<dbReference type="Pfam" id="PF02664">
    <property type="entry name" value="LuxS"/>
    <property type="match status" value="1"/>
</dbReference>
<dbReference type="PIRSF" id="PIRSF006160">
    <property type="entry name" value="AI2"/>
    <property type="match status" value="1"/>
</dbReference>
<dbReference type="PRINTS" id="PR01487">
    <property type="entry name" value="LUXSPROTEIN"/>
</dbReference>
<dbReference type="SUPFAM" id="SSF63411">
    <property type="entry name" value="LuxS/MPP-like metallohydrolase"/>
    <property type="match status" value="1"/>
</dbReference>
<accession>C1CBB9</accession>
<organism>
    <name type="scientific">Streptococcus pneumoniae (strain 70585)</name>
    <dbReference type="NCBI Taxonomy" id="488221"/>
    <lineage>
        <taxon>Bacteria</taxon>
        <taxon>Bacillati</taxon>
        <taxon>Bacillota</taxon>
        <taxon>Bacilli</taxon>
        <taxon>Lactobacillales</taxon>
        <taxon>Streptococcaceae</taxon>
        <taxon>Streptococcus</taxon>
    </lineage>
</organism>
<sequence length="160" mass="17923">MSKEVIVESFELDHTIVKAPYVRLIGEETGPKGDIISNYDIRLVQPNEDSIPTAGLHTIEHLLAKLIRTRIDGMIDCSPFGCRTGFHMIMWGRHTSAKIAAVIKDSLKEIAETTTWEDVPGTTIESCGNYKDHSLFSAKEWAKLILEQGISDDAFERHVI</sequence>
<reference key="1">
    <citation type="journal article" date="2010" name="Genome Biol.">
        <title>Structure and dynamics of the pan-genome of Streptococcus pneumoniae and closely related species.</title>
        <authorList>
            <person name="Donati C."/>
            <person name="Hiller N.L."/>
            <person name="Tettelin H."/>
            <person name="Muzzi A."/>
            <person name="Croucher N.J."/>
            <person name="Angiuoli S.V."/>
            <person name="Oggioni M."/>
            <person name="Dunning Hotopp J.C."/>
            <person name="Hu F.Z."/>
            <person name="Riley D.R."/>
            <person name="Covacci A."/>
            <person name="Mitchell T.J."/>
            <person name="Bentley S.D."/>
            <person name="Kilian M."/>
            <person name="Ehrlich G.D."/>
            <person name="Rappuoli R."/>
            <person name="Moxon E.R."/>
            <person name="Masignani V."/>
        </authorList>
    </citation>
    <scope>NUCLEOTIDE SEQUENCE [LARGE SCALE GENOMIC DNA]</scope>
    <source>
        <strain>70585</strain>
    </source>
</reference>
<comment type="function">
    <text evidence="1">Involved in the synthesis of autoinducer 2 (AI-2) which is secreted by bacteria and is used to communicate both the cell density and the metabolic potential of the environment. The regulation of gene expression in response to changes in cell density is called quorum sensing. Catalyzes the transformation of S-ribosylhomocysteine (RHC) to homocysteine (HC) and 4,5-dihydroxy-2,3-pentadione (DPD).</text>
</comment>
<comment type="catalytic activity">
    <reaction evidence="1">
        <text>S-(5-deoxy-D-ribos-5-yl)-L-homocysteine = (S)-4,5-dihydroxypentane-2,3-dione + L-homocysteine</text>
        <dbReference type="Rhea" id="RHEA:17753"/>
        <dbReference type="ChEBI" id="CHEBI:29484"/>
        <dbReference type="ChEBI" id="CHEBI:58195"/>
        <dbReference type="ChEBI" id="CHEBI:58199"/>
        <dbReference type="EC" id="4.4.1.21"/>
    </reaction>
</comment>
<comment type="cofactor">
    <cofactor evidence="1">
        <name>Fe cation</name>
        <dbReference type="ChEBI" id="CHEBI:24875"/>
    </cofactor>
    <text evidence="1">Binds 1 Fe cation per subunit.</text>
</comment>
<comment type="subunit">
    <text evidence="1">Homodimer.</text>
</comment>
<comment type="similarity">
    <text evidence="1">Belongs to the LuxS family.</text>
</comment>
<name>LUXS_STRP7</name>
<evidence type="ECO:0000255" key="1">
    <source>
        <dbReference type="HAMAP-Rule" id="MF_00091"/>
    </source>
</evidence>
<feature type="chain" id="PRO_1000191040" description="S-ribosylhomocysteine lyase">
    <location>
        <begin position="1"/>
        <end position="160"/>
    </location>
</feature>
<feature type="binding site" evidence="1">
    <location>
        <position position="57"/>
    </location>
    <ligand>
        <name>Fe cation</name>
        <dbReference type="ChEBI" id="CHEBI:24875"/>
    </ligand>
</feature>
<feature type="binding site" evidence="1">
    <location>
        <position position="61"/>
    </location>
    <ligand>
        <name>Fe cation</name>
        <dbReference type="ChEBI" id="CHEBI:24875"/>
    </ligand>
</feature>
<feature type="binding site" evidence="1">
    <location>
        <position position="127"/>
    </location>
    <ligand>
        <name>Fe cation</name>
        <dbReference type="ChEBI" id="CHEBI:24875"/>
    </ligand>
</feature>
<gene>
    <name evidence="1" type="primary">luxS</name>
    <name type="ordered locus">SP70585_0404</name>
</gene>
<keyword id="KW-0071">Autoinducer synthesis</keyword>
<keyword id="KW-0408">Iron</keyword>
<keyword id="KW-0456">Lyase</keyword>
<keyword id="KW-0479">Metal-binding</keyword>
<keyword id="KW-0673">Quorum sensing</keyword>